<name>YWFA_BACSU</name>
<sequence>MNSNQNNDIKTKHHFPLLLALALTMGVFAAGSEELVISPLLPDLAKAFSSDVSVLALSISIYGVMIFIGAPLLVPLGDKYSRELSLLAGLMIFIIGTVICALAQNIFFFFLGRALSGLAAGAFVPTAYAVVGDRVPYTYRGKVMGLIVSSWSLALIFGVPLGSFIGGVLHWRWTFWIFALMGVLVVLLILLEMRRHAQHKNSGKEEIEEPAGTFRDALKVPRVPVYITITFCNMIGFYGMYSFLGTYLQDVFTGGNTAAGLFIMIYGIGFSMSVITGKIADRIGKMRSLLIALGVISVLLACLPYAPASMFLLIASLFIWGLMQSLTVTLLSTILSDCSERHRGKVMVFYSLASNLAVTLGSALMGPVYVAYGYAAVGLICAAITVLGFVLSVFAYKKYGKLEQKADQSLSQ</sequence>
<gene>
    <name type="primary">ywfA</name>
    <name type="ordered locus">BSU37750</name>
    <name type="ORF">ipa-79d</name>
</gene>
<comment type="subcellular location">
    <subcellularLocation>
        <location evidence="2">Cell membrane</location>
        <topology evidence="2">Multi-pass membrane protein</topology>
    </subcellularLocation>
</comment>
<comment type="similarity">
    <text evidence="2">Belongs to the major facilitator superfamily.</text>
</comment>
<organism>
    <name type="scientific">Bacillus subtilis (strain 168)</name>
    <dbReference type="NCBI Taxonomy" id="224308"/>
    <lineage>
        <taxon>Bacteria</taxon>
        <taxon>Bacillati</taxon>
        <taxon>Bacillota</taxon>
        <taxon>Bacilli</taxon>
        <taxon>Bacillales</taxon>
        <taxon>Bacillaceae</taxon>
        <taxon>Bacillus</taxon>
    </lineage>
</organism>
<protein>
    <recommendedName>
        <fullName>Uncharacterized MFS-type transporter YwfA</fullName>
    </recommendedName>
</protein>
<reference key="1">
    <citation type="journal article" date="1993" name="Mol. Microbiol.">
        <title>Bacillus subtilis genome project: cloning and sequencing of the 97 kb region from 325 degrees to 333 degrees.</title>
        <authorList>
            <person name="Glaser P."/>
            <person name="Kunst F."/>
            <person name="Arnaud M."/>
            <person name="Coudart M.P."/>
            <person name="Gonzales W."/>
            <person name="Hullo M.-F."/>
            <person name="Ionescu M."/>
            <person name="Lubochinsky B."/>
            <person name="Marcelino L."/>
            <person name="Moszer I."/>
            <person name="Presecan E."/>
            <person name="Santana M."/>
            <person name="Schneider E."/>
            <person name="Schweizer J."/>
            <person name="Vertes A."/>
            <person name="Rapoport G."/>
            <person name="Danchin A."/>
        </authorList>
    </citation>
    <scope>NUCLEOTIDE SEQUENCE [GENOMIC DNA]</scope>
    <source>
        <strain>168</strain>
    </source>
</reference>
<reference key="2">
    <citation type="journal article" date="1997" name="Nature">
        <title>The complete genome sequence of the Gram-positive bacterium Bacillus subtilis.</title>
        <authorList>
            <person name="Kunst F."/>
            <person name="Ogasawara N."/>
            <person name="Moszer I."/>
            <person name="Albertini A.M."/>
            <person name="Alloni G."/>
            <person name="Azevedo V."/>
            <person name="Bertero M.G."/>
            <person name="Bessieres P."/>
            <person name="Bolotin A."/>
            <person name="Borchert S."/>
            <person name="Borriss R."/>
            <person name="Boursier L."/>
            <person name="Brans A."/>
            <person name="Braun M."/>
            <person name="Brignell S.C."/>
            <person name="Bron S."/>
            <person name="Brouillet S."/>
            <person name="Bruschi C.V."/>
            <person name="Caldwell B."/>
            <person name="Capuano V."/>
            <person name="Carter N.M."/>
            <person name="Choi S.-K."/>
            <person name="Codani J.-J."/>
            <person name="Connerton I.F."/>
            <person name="Cummings N.J."/>
            <person name="Daniel R.A."/>
            <person name="Denizot F."/>
            <person name="Devine K.M."/>
            <person name="Duesterhoeft A."/>
            <person name="Ehrlich S.D."/>
            <person name="Emmerson P.T."/>
            <person name="Entian K.-D."/>
            <person name="Errington J."/>
            <person name="Fabret C."/>
            <person name="Ferrari E."/>
            <person name="Foulger D."/>
            <person name="Fritz C."/>
            <person name="Fujita M."/>
            <person name="Fujita Y."/>
            <person name="Fuma S."/>
            <person name="Galizzi A."/>
            <person name="Galleron N."/>
            <person name="Ghim S.-Y."/>
            <person name="Glaser P."/>
            <person name="Goffeau A."/>
            <person name="Golightly E.J."/>
            <person name="Grandi G."/>
            <person name="Guiseppi G."/>
            <person name="Guy B.J."/>
            <person name="Haga K."/>
            <person name="Haiech J."/>
            <person name="Harwood C.R."/>
            <person name="Henaut A."/>
            <person name="Hilbert H."/>
            <person name="Holsappel S."/>
            <person name="Hosono S."/>
            <person name="Hullo M.-F."/>
            <person name="Itaya M."/>
            <person name="Jones L.-M."/>
            <person name="Joris B."/>
            <person name="Karamata D."/>
            <person name="Kasahara Y."/>
            <person name="Klaerr-Blanchard M."/>
            <person name="Klein C."/>
            <person name="Kobayashi Y."/>
            <person name="Koetter P."/>
            <person name="Koningstein G."/>
            <person name="Krogh S."/>
            <person name="Kumano M."/>
            <person name="Kurita K."/>
            <person name="Lapidus A."/>
            <person name="Lardinois S."/>
            <person name="Lauber J."/>
            <person name="Lazarevic V."/>
            <person name="Lee S.-M."/>
            <person name="Levine A."/>
            <person name="Liu H."/>
            <person name="Masuda S."/>
            <person name="Mauel C."/>
            <person name="Medigue C."/>
            <person name="Medina N."/>
            <person name="Mellado R.P."/>
            <person name="Mizuno M."/>
            <person name="Moestl D."/>
            <person name="Nakai S."/>
            <person name="Noback M."/>
            <person name="Noone D."/>
            <person name="O'Reilly M."/>
            <person name="Ogawa K."/>
            <person name="Ogiwara A."/>
            <person name="Oudega B."/>
            <person name="Park S.-H."/>
            <person name="Parro V."/>
            <person name="Pohl T.M."/>
            <person name="Portetelle D."/>
            <person name="Porwollik S."/>
            <person name="Prescott A.M."/>
            <person name="Presecan E."/>
            <person name="Pujic P."/>
            <person name="Purnelle B."/>
            <person name="Rapoport G."/>
            <person name="Rey M."/>
            <person name="Reynolds S."/>
            <person name="Rieger M."/>
            <person name="Rivolta C."/>
            <person name="Rocha E."/>
            <person name="Roche B."/>
            <person name="Rose M."/>
            <person name="Sadaie Y."/>
            <person name="Sato T."/>
            <person name="Scanlan E."/>
            <person name="Schleich S."/>
            <person name="Schroeter R."/>
            <person name="Scoffone F."/>
            <person name="Sekiguchi J."/>
            <person name="Sekowska A."/>
            <person name="Seror S.J."/>
            <person name="Serror P."/>
            <person name="Shin B.-S."/>
            <person name="Soldo B."/>
            <person name="Sorokin A."/>
            <person name="Tacconi E."/>
            <person name="Takagi T."/>
            <person name="Takahashi H."/>
            <person name="Takemaru K."/>
            <person name="Takeuchi M."/>
            <person name="Tamakoshi A."/>
            <person name="Tanaka T."/>
            <person name="Terpstra P."/>
            <person name="Tognoni A."/>
            <person name="Tosato V."/>
            <person name="Uchiyama S."/>
            <person name="Vandenbol M."/>
            <person name="Vannier F."/>
            <person name="Vassarotti A."/>
            <person name="Viari A."/>
            <person name="Wambutt R."/>
            <person name="Wedler E."/>
            <person name="Wedler H."/>
            <person name="Weitzenegger T."/>
            <person name="Winters P."/>
            <person name="Wipat A."/>
            <person name="Yamamoto H."/>
            <person name="Yamane K."/>
            <person name="Yasumoto K."/>
            <person name="Yata K."/>
            <person name="Yoshida K."/>
            <person name="Yoshikawa H.-F."/>
            <person name="Zumstein E."/>
            <person name="Yoshikawa H."/>
            <person name="Danchin A."/>
        </authorList>
    </citation>
    <scope>NUCLEOTIDE SEQUENCE [LARGE SCALE GENOMIC DNA]</scope>
    <source>
        <strain>168</strain>
    </source>
</reference>
<dbReference type="EMBL" id="X73124">
    <property type="protein sequence ID" value="CAA51635.1"/>
    <property type="molecule type" value="Genomic_DNA"/>
</dbReference>
<dbReference type="EMBL" id="AL009126">
    <property type="protein sequence ID" value="CAB15802.1"/>
    <property type="molecule type" value="Genomic_DNA"/>
</dbReference>
<dbReference type="PIR" id="S39734">
    <property type="entry name" value="S39734"/>
</dbReference>
<dbReference type="RefSeq" id="NP_391655.1">
    <property type="nucleotide sequence ID" value="NC_000964.3"/>
</dbReference>
<dbReference type="RefSeq" id="WP_003242790.1">
    <property type="nucleotide sequence ID" value="NZ_OZ025638.1"/>
</dbReference>
<dbReference type="SMR" id="P39637"/>
<dbReference type="FunCoup" id="P39637">
    <property type="interactions" value="80"/>
</dbReference>
<dbReference type="STRING" id="224308.BSU37750"/>
<dbReference type="PaxDb" id="224308-BSU37750"/>
<dbReference type="EnsemblBacteria" id="CAB15802">
    <property type="protein sequence ID" value="CAB15802"/>
    <property type="gene ID" value="BSU_37750"/>
</dbReference>
<dbReference type="GeneID" id="937061"/>
<dbReference type="KEGG" id="bsu:BSU37750"/>
<dbReference type="PATRIC" id="fig|224308.179.peg.4087"/>
<dbReference type="eggNOG" id="COG2814">
    <property type="taxonomic scope" value="Bacteria"/>
</dbReference>
<dbReference type="InParanoid" id="P39637"/>
<dbReference type="OrthoDB" id="212436at2"/>
<dbReference type="PhylomeDB" id="P39637"/>
<dbReference type="BioCyc" id="BSUB:BSU37750-MONOMER"/>
<dbReference type="Proteomes" id="UP000001570">
    <property type="component" value="Chromosome"/>
</dbReference>
<dbReference type="GO" id="GO:0005886">
    <property type="term" value="C:plasma membrane"/>
    <property type="evidence" value="ECO:0000318"/>
    <property type="project" value="GO_Central"/>
</dbReference>
<dbReference type="GO" id="GO:0022857">
    <property type="term" value="F:transmembrane transporter activity"/>
    <property type="evidence" value="ECO:0000318"/>
    <property type="project" value="GO_Central"/>
</dbReference>
<dbReference type="GO" id="GO:0055085">
    <property type="term" value="P:transmembrane transport"/>
    <property type="evidence" value="ECO:0000318"/>
    <property type="project" value="GO_Central"/>
</dbReference>
<dbReference type="CDD" id="cd17324">
    <property type="entry name" value="MFS_NepI_like"/>
    <property type="match status" value="1"/>
</dbReference>
<dbReference type="Gene3D" id="1.20.1250.20">
    <property type="entry name" value="MFS general substrate transporter like domains"/>
    <property type="match status" value="1"/>
</dbReference>
<dbReference type="InterPro" id="IPR011701">
    <property type="entry name" value="MFS"/>
</dbReference>
<dbReference type="InterPro" id="IPR020846">
    <property type="entry name" value="MFS_dom"/>
</dbReference>
<dbReference type="InterPro" id="IPR050189">
    <property type="entry name" value="MFS_Efflux_Transporters"/>
</dbReference>
<dbReference type="InterPro" id="IPR036259">
    <property type="entry name" value="MFS_trans_sf"/>
</dbReference>
<dbReference type="PANTHER" id="PTHR43124:SF3">
    <property type="entry name" value="CHLORAMPHENICOL EFFLUX PUMP RV0191"/>
    <property type="match status" value="1"/>
</dbReference>
<dbReference type="PANTHER" id="PTHR43124">
    <property type="entry name" value="PURINE EFFLUX PUMP PBUE"/>
    <property type="match status" value="1"/>
</dbReference>
<dbReference type="Pfam" id="PF07690">
    <property type="entry name" value="MFS_1"/>
    <property type="match status" value="1"/>
</dbReference>
<dbReference type="SUPFAM" id="SSF103473">
    <property type="entry name" value="MFS general substrate transporter"/>
    <property type="match status" value="1"/>
</dbReference>
<dbReference type="PROSITE" id="PS50850">
    <property type="entry name" value="MFS"/>
    <property type="match status" value="1"/>
</dbReference>
<feature type="chain" id="PRO_0000049970" description="Uncharacterized MFS-type transporter YwfA">
    <location>
        <begin position="1"/>
        <end position="412"/>
    </location>
</feature>
<feature type="transmembrane region" description="Helical" evidence="1">
    <location>
        <begin position="17"/>
        <end position="37"/>
    </location>
</feature>
<feature type="transmembrane region" description="Helical" evidence="1">
    <location>
        <begin position="54"/>
        <end position="74"/>
    </location>
</feature>
<feature type="transmembrane region" description="Helical" evidence="1">
    <location>
        <begin position="91"/>
        <end position="111"/>
    </location>
</feature>
<feature type="transmembrane region" description="Helical" evidence="1">
    <location>
        <begin position="112"/>
        <end position="132"/>
    </location>
</feature>
<feature type="transmembrane region" description="Helical" evidence="1">
    <location>
        <begin position="146"/>
        <end position="166"/>
    </location>
</feature>
<feature type="transmembrane region" description="Helical" evidence="1">
    <location>
        <begin position="173"/>
        <end position="193"/>
    </location>
</feature>
<feature type="transmembrane region" description="Helical" evidence="1">
    <location>
        <begin position="225"/>
        <end position="245"/>
    </location>
</feature>
<feature type="transmembrane region" description="Helical" evidence="1">
    <location>
        <begin position="257"/>
        <end position="277"/>
    </location>
</feature>
<feature type="transmembrane region" description="Helical" evidence="1">
    <location>
        <begin position="299"/>
        <end position="319"/>
    </location>
</feature>
<feature type="transmembrane region" description="Helical" evidence="1">
    <location>
        <begin position="346"/>
        <end position="366"/>
    </location>
</feature>
<feature type="transmembrane region" description="Helical" evidence="1">
    <location>
        <begin position="375"/>
        <end position="395"/>
    </location>
</feature>
<accession>P39637</accession>
<proteinExistence type="inferred from homology"/>
<keyword id="KW-1003">Cell membrane</keyword>
<keyword id="KW-0472">Membrane</keyword>
<keyword id="KW-1185">Reference proteome</keyword>
<keyword id="KW-0812">Transmembrane</keyword>
<keyword id="KW-1133">Transmembrane helix</keyword>
<keyword id="KW-0813">Transport</keyword>
<evidence type="ECO:0000255" key="1"/>
<evidence type="ECO:0000305" key="2"/>